<evidence type="ECO:0000255" key="1">
    <source>
        <dbReference type="HAMAP-Rule" id="MF_00624"/>
    </source>
</evidence>
<comment type="function">
    <text evidence="1">Involved in the biosynthesis of ADP-glucose, a building block required for the elongation reactions to produce glycogen. Catalyzes the reaction between ATP and alpha-D-glucose 1-phosphate (G1P) to produce pyrophosphate and ADP-Glc.</text>
</comment>
<comment type="catalytic activity">
    <reaction evidence="1">
        <text>alpha-D-glucose 1-phosphate + ATP + H(+) = ADP-alpha-D-glucose + diphosphate</text>
        <dbReference type="Rhea" id="RHEA:12120"/>
        <dbReference type="ChEBI" id="CHEBI:15378"/>
        <dbReference type="ChEBI" id="CHEBI:30616"/>
        <dbReference type="ChEBI" id="CHEBI:33019"/>
        <dbReference type="ChEBI" id="CHEBI:57498"/>
        <dbReference type="ChEBI" id="CHEBI:58601"/>
        <dbReference type="EC" id="2.7.7.27"/>
    </reaction>
</comment>
<comment type="pathway">
    <text evidence="1">Glycan biosynthesis; glycogen biosynthesis.</text>
</comment>
<comment type="subunit">
    <text evidence="1">Homotetramer.</text>
</comment>
<comment type="similarity">
    <text evidence="1">Belongs to the bacterial/plant glucose-1-phosphate adenylyltransferase family.</text>
</comment>
<keyword id="KW-0067">ATP-binding</keyword>
<keyword id="KW-0119">Carbohydrate metabolism</keyword>
<keyword id="KW-0320">Glycogen biosynthesis</keyword>
<keyword id="KW-0321">Glycogen metabolism</keyword>
<keyword id="KW-0547">Nucleotide-binding</keyword>
<keyword id="KW-0548">Nucleotidyltransferase</keyword>
<keyword id="KW-0808">Transferase</keyword>
<gene>
    <name evidence="1" type="primary">glgC</name>
    <name type="ordered locus">Franean1_2092</name>
</gene>
<name>GLGC_PARS2</name>
<proteinExistence type="inferred from homology"/>
<dbReference type="EC" id="2.7.7.27" evidence="1"/>
<dbReference type="EMBL" id="CP000820">
    <property type="protein sequence ID" value="ABW11529.1"/>
    <property type="molecule type" value="Genomic_DNA"/>
</dbReference>
<dbReference type="RefSeq" id="WP_020459695.1">
    <property type="nucleotide sequence ID" value="NC_009921.1"/>
</dbReference>
<dbReference type="SMR" id="A8KYU3"/>
<dbReference type="STRING" id="298653.Franean1_2092"/>
<dbReference type="KEGG" id="fre:Franean1_2092"/>
<dbReference type="eggNOG" id="COG0448">
    <property type="taxonomic scope" value="Bacteria"/>
</dbReference>
<dbReference type="HOGENOM" id="CLU_029499_14_1_11"/>
<dbReference type="UniPathway" id="UPA00164"/>
<dbReference type="GO" id="GO:0005524">
    <property type="term" value="F:ATP binding"/>
    <property type="evidence" value="ECO:0007669"/>
    <property type="project" value="UniProtKB-KW"/>
</dbReference>
<dbReference type="GO" id="GO:0008878">
    <property type="term" value="F:glucose-1-phosphate adenylyltransferase activity"/>
    <property type="evidence" value="ECO:0007669"/>
    <property type="project" value="UniProtKB-UniRule"/>
</dbReference>
<dbReference type="GO" id="GO:0005978">
    <property type="term" value="P:glycogen biosynthetic process"/>
    <property type="evidence" value="ECO:0007669"/>
    <property type="project" value="UniProtKB-UniRule"/>
</dbReference>
<dbReference type="CDD" id="cd02508">
    <property type="entry name" value="ADP_Glucose_PP"/>
    <property type="match status" value="1"/>
</dbReference>
<dbReference type="CDD" id="cd04651">
    <property type="entry name" value="LbH_G1P_AT_C"/>
    <property type="match status" value="1"/>
</dbReference>
<dbReference type="Gene3D" id="2.160.10.10">
    <property type="entry name" value="Hexapeptide repeat proteins"/>
    <property type="match status" value="1"/>
</dbReference>
<dbReference type="Gene3D" id="3.90.550.10">
    <property type="entry name" value="Spore Coat Polysaccharide Biosynthesis Protein SpsA, Chain A"/>
    <property type="match status" value="1"/>
</dbReference>
<dbReference type="HAMAP" id="MF_00624">
    <property type="entry name" value="GlgC"/>
    <property type="match status" value="1"/>
</dbReference>
<dbReference type="InterPro" id="IPR011831">
    <property type="entry name" value="ADP-Glc_PPase"/>
</dbReference>
<dbReference type="InterPro" id="IPR005836">
    <property type="entry name" value="ADP_Glu_pyroP_CS"/>
</dbReference>
<dbReference type="InterPro" id="IPR023049">
    <property type="entry name" value="GlgC_bac"/>
</dbReference>
<dbReference type="InterPro" id="IPR056818">
    <property type="entry name" value="GlmU/GlgC-like_hexapep"/>
</dbReference>
<dbReference type="InterPro" id="IPR005835">
    <property type="entry name" value="NTP_transferase_dom"/>
</dbReference>
<dbReference type="InterPro" id="IPR029044">
    <property type="entry name" value="Nucleotide-diphossugar_trans"/>
</dbReference>
<dbReference type="InterPro" id="IPR011004">
    <property type="entry name" value="Trimer_LpxA-like_sf"/>
</dbReference>
<dbReference type="NCBIfam" id="TIGR02091">
    <property type="entry name" value="glgC"/>
    <property type="match status" value="1"/>
</dbReference>
<dbReference type="NCBIfam" id="NF001947">
    <property type="entry name" value="PRK00725.1"/>
    <property type="match status" value="1"/>
</dbReference>
<dbReference type="NCBIfam" id="NF002023">
    <property type="entry name" value="PRK00844.1"/>
    <property type="match status" value="1"/>
</dbReference>
<dbReference type="PANTHER" id="PTHR43523:SF2">
    <property type="entry name" value="GLUCOSE-1-PHOSPHATE ADENYLYLTRANSFERASE"/>
    <property type="match status" value="1"/>
</dbReference>
<dbReference type="PANTHER" id="PTHR43523">
    <property type="entry name" value="GLUCOSE-1-PHOSPHATE ADENYLYLTRANSFERASE-RELATED"/>
    <property type="match status" value="1"/>
</dbReference>
<dbReference type="Pfam" id="PF24894">
    <property type="entry name" value="Hexapep_GlmU"/>
    <property type="match status" value="1"/>
</dbReference>
<dbReference type="Pfam" id="PF00483">
    <property type="entry name" value="NTP_transferase"/>
    <property type="match status" value="1"/>
</dbReference>
<dbReference type="SUPFAM" id="SSF53448">
    <property type="entry name" value="Nucleotide-diphospho-sugar transferases"/>
    <property type="match status" value="1"/>
</dbReference>
<dbReference type="SUPFAM" id="SSF51161">
    <property type="entry name" value="Trimeric LpxA-like enzymes"/>
    <property type="match status" value="1"/>
</dbReference>
<dbReference type="PROSITE" id="PS00808">
    <property type="entry name" value="ADP_GLC_PYROPHOSPH_1"/>
    <property type="match status" value="1"/>
</dbReference>
<dbReference type="PROSITE" id="PS00809">
    <property type="entry name" value="ADP_GLC_PYROPHOSPH_2"/>
    <property type="match status" value="1"/>
</dbReference>
<dbReference type="PROSITE" id="PS00810">
    <property type="entry name" value="ADP_GLC_PYROPHOSPH_3"/>
    <property type="match status" value="1"/>
</dbReference>
<accession>A8KYU3</accession>
<protein>
    <recommendedName>
        <fullName evidence="1">Glucose-1-phosphate adenylyltransferase</fullName>
        <ecNumber evidence="1">2.7.7.27</ecNumber>
    </recommendedName>
    <alternativeName>
        <fullName evidence="1">ADP-glucose pyrophosphorylase</fullName>
        <shortName evidence="1">ADPGlc PPase</shortName>
    </alternativeName>
    <alternativeName>
        <fullName evidence="1">ADP-glucose synthase</fullName>
    </alternativeName>
</protein>
<reference key="1">
    <citation type="journal article" date="2007" name="Genome Res.">
        <title>Genome characteristics of facultatively symbiotic Frankia sp. strains reflect host range and host plant biogeography.</title>
        <authorList>
            <person name="Normand P."/>
            <person name="Lapierre P."/>
            <person name="Tisa L.S."/>
            <person name="Gogarten J.P."/>
            <person name="Alloisio N."/>
            <person name="Bagnarol E."/>
            <person name="Bassi C.A."/>
            <person name="Berry A.M."/>
            <person name="Bickhart D.M."/>
            <person name="Choisne N."/>
            <person name="Couloux A."/>
            <person name="Cournoyer B."/>
            <person name="Cruveiller S."/>
            <person name="Daubin V."/>
            <person name="Demange N."/>
            <person name="Francino M.P."/>
            <person name="Goltsman E."/>
            <person name="Huang Y."/>
            <person name="Kopp O.R."/>
            <person name="Labarre L."/>
            <person name="Lapidus A."/>
            <person name="Lavire C."/>
            <person name="Marechal J."/>
            <person name="Martinez M."/>
            <person name="Mastronunzio J.E."/>
            <person name="Mullin B.C."/>
            <person name="Niemann J."/>
            <person name="Pujic P."/>
            <person name="Rawnsley T."/>
            <person name="Rouy Z."/>
            <person name="Schenowitz C."/>
            <person name="Sellstedt A."/>
            <person name="Tavares F."/>
            <person name="Tomkins J.P."/>
            <person name="Vallenet D."/>
            <person name="Valverde C."/>
            <person name="Wall L.G."/>
            <person name="Wang Y."/>
            <person name="Medigue C."/>
            <person name="Benson D.R."/>
        </authorList>
    </citation>
    <scope>NUCLEOTIDE SEQUENCE [LARGE SCALE GENOMIC DNA]</scope>
    <source>
        <strain>EAN1pec</strain>
    </source>
</reference>
<organism>
    <name type="scientific">Parafrankia sp. (strain EAN1pec)</name>
    <dbReference type="NCBI Taxonomy" id="298653"/>
    <lineage>
        <taxon>Bacteria</taxon>
        <taxon>Bacillati</taxon>
        <taxon>Actinomycetota</taxon>
        <taxon>Actinomycetes</taxon>
        <taxon>Frankiales</taxon>
        <taxon>Frankiaceae</taxon>
        <taxon>Parafrankia</taxon>
    </lineage>
</organism>
<sequence>MRSPRVLGLVLAGGAGKRLAPLTADRAKPAVPFGGIYRLVDFVLSNLVNGGYLRIAVLTQYKSHSLDRHITTTWRMSNLLGNYVTPVPAQQRLGPQWFAGSADAIHQSLNLVHDEAPDVVVVFGADHVYRMDPRQMVAQHLETGAGVTVAGLRVPRSEGSAFGVIRTADDGVTIAEFLEKPADPPGLPGSPDEIFASMGNYVFTTDVLIDALRADAADPESVHDMGGSIVPMLVEQGTAAVYDFAANQVPGALERDHGYWRDVGTLDSYFDAHMDLCALDPVFNLYNRDWPIYTNVPPSVPPAKFVHDTPGRVGVATDSIVSNGVIISGGAVRRSVLSPGVRVNSWSVVENAVVMDNSVIGRRAVVRDAILDKNVVVPPGATVGVDKEHDRARGYQVSEAGVTVVGKGVTIAD</sequence>
<feature type="chain" id="PRO_1000130485" description="Glucose-1-phosphate adenylyltransferase">
    <location>
        <begin position="1"/>
        <end position="413"/>
    </location>
</feature>
<feature type="binding site" evidence="1">
    <location>
        <position position="163"/>
    </location>
    <ligand>
        <name>alpha-D-glucose 1-phosphate</name>
        <dbReference type="ChEBI" id="CHEBI:58601"/>
    </ligand>
</feature>
<feature type="binding site" evidence="1">
    <location>
        <begin position="179"/>
        <end position="180"/>
    </location>
    <ligand>
        <name>alpha-D-glucose 1-phosphate</name>
        <dbReference type="ChEBI" id="CHEBI:58601"/>
    </ligand>
</feature>
<feature type="binding site" evidence="1">
    <location>
        <position position="197"/>
    </location>
    <ligand>
        <name>alpha-D-glucose 1-phosphate</name>
        <dbReference type="ChEBI" id="CHEBI:58601"/>
    </ligand>
</feature>